<evidence type="ECO:0000250" key="1"/>
<evidence type="ECO:0000255" key="2"/>
<evidence type="ECO:0000269" key="3">
    <source>
    </source>
</evidence>
<evidence type="ECO:0000305" key="4"/>
<evidence type="ECO:0000305" key="5">
    <source>
    </source>
</evidence>
<gene>
    <name type="primary">yloB</name>
    <name type="ordered locus">BSU15650</name>
</gene>
<organism>
    <name type="scientific">Bacillus subtilis (strain 168)</name>
    <dbReference type="NCBI Taxonomy" id="224308"/>
    <lineage>
        <taxon>Bacteria</taxon>
        <taxon>Bacillati</taxon>
        <taxon>Bacillota</taxon>
        <taxon>Bacilli</taxon>
        <taxon>Bacillales</taxon>
        <taxon>Bacillaceae</taxon>
        <taxon>Bacillus</taxon>
    </lineage>
</organism>
<sequence>MKFHEMGQTDLLEATNTSMKQGLTEKEVKKRLDKHGPNELQEGKKTSALLLFFAQFKDFMVLVLLAATLISGFLGEYVDAVAIIAIVFVNGILGFFQERRAEQSLQALKELSTPHVMALREGSWTKIPSKELVPGDIVKFTSGDRIGADVRIVEARSLEIEESALTGESIPVVKHADKLKKPDVSLGDITNMAFMGTIVTRGSGVGVVVGTGMNTAMGKIADMLESAGTLSTPLQRRLEQLGKILIVVALLLTVLVVAVGVIQGHDLYSMFLAGVSLAVAAIPEGLPAIVTVALSLGVQRMIKQKSIVRKLPAVETLGCASIICSDKTGTMTQNKMTVTHVWSGGKTWRVAGAGYEPKGSFTLNEKEISVNEHKPLQQMLLFGALCNNSNIEKRDGEYVLDGDPTEGALLTAARKGGFSKEFVESNYRVIEEFPFDSARKMMTVIVENQDRKRYIITKGAPDVLMQRSSRIYYDGSAALFSNERKAETEAVLRHLASQALRTIAVAYRPIKAGETPSMEQAEKDLTMLGLSGIIDPPRPEVRQAIKECREAGIKTVMITGDHVETAKAIAKDLRLLPKSGKIMDGKMLNELSQEELSHVVEDVYVFARVSPEHKLKIVKAYQENGHIVAMTGDGVNDAPAIKQADIGVSMGITGTDVAKEASSLVLVDDNFATIKSAIKEGRNIYENIRKFIRYLLASNVGEILVMLFAMLLALPLPLVPIQILWVNLVTDGLPAMALGMDQPEGDVMKRKPRHPKEGVFARKLGWKVVSRGFLIGVATILAFIIVYHRNPENLAYAQTIAFATLVLAQLIHVFDCRSETSVFSRNPFQNLYLIGAVLSSILLMLVVIYYPPLQPIFHTVAITPGDWMLVIGMSAIPTFLLAGSLLTRKK</sequence>
<comment type="function">
    <text evidence="3">This magnesium-dependent enzyme catalyzes the hydrolysis of ATP coupled with the transport of calcium.</text>
</comment>
<comment type="catalytic activity">
    <reaction evidence="3">
        <text>Ca(2+)(in) + ATP + H2O = Ca(2+)(out) + ADP + phosphate + H(+)</text>
        <dbReference type="Rhea" id="RHEA:18105"/>
        <dbReference type="ChEBI" id="CHEBI:15377"/>
        <dbReference type="ChEBI" id="CHEBI:15378"/>
        <dbReference type="ChEBI" id="CHEBI:29108"/>
        <dbReference type="ChEBI" id="CHEBI:30616"/>
        <dbReference type="ChEBI" id="CHEBI:43474"/>
        <dbReference type="ChEBI" id="CHEBI:456216"/>
        <dbReference type="EC" id="7.2.2.10"/>
    </reaction>
</comment>
<comment type="subcellular location">
    <subcellularLocation>
        <location evidence="3">Cell membrane</location>
        <topology evidence="2">Multi-pass membrane protein</topology>
    </subcellularLocation>
</comment>
<comment type="developmental stage">
    <text evidence="3">Expressed from 4 hours and peaks at 9 hours after onset of sporulation.</text>
</comment>
<comment type="induction">
    <text evidence="3">Expressed under control of sigma-F (sigF).</text>
</comment>
<comment type="PTM">
    <text evidence="3">Phosphorylated in a Ca(2+)-dependent manner starting 4 hours after shifting to sporulation medium.</text>
</comment>
<comment type="disruption phenotype">
    <text evidence="3">Spores are less resistant to heat and germinate at a slower rate, Ca(2+)-dependent phosphorylation is no longer seen.</text>
</comment>
<comment type="similarity">
    <text evidence="4">Belongs to the cation transport ATPase (P-type) (TC 3.A.3) family. Type IIA subfamily.</text>
</comment>
<name>ATCL_BACSU</name>
<keyword id="KW-0067">ATP-binding</keyword>
<keyword id="KW-0106">Calcium</keyword>
<keyword id="KW-0109">Calcium transport</keyword>
<keyword id="KW-1003">Cell membrane</keyword>
<keyword id="KW-0406">Ion transport</keyword>
<keyword id="KW-0460">Magnesium</keyword>
<keyword id="KW-0472">Membrane</keyword>
<keyword id="KW-0479">Metal-binding</keyword>
<keyword id="KW-0547">Nucleotide-binding</keyword>
<keyword id="KW-0597">Phosphoprotein</keyword>
<keyword id="KW-1185">Reference proteome</keyword>
<keyword id="KW-1278">Translocase</keyword>
<keyword id="KW-0812">Transmembrane</keyword>
<keyword id="KW-1133">Transmembrane helix</keyword>
<keyword id="KW-0813">Transport</keyword>
<protein>
    <recommendedName>
        <fullName>Calcium-transporting ATPase</fullName>
        <ecNumber>7.2.2.10</ecNumber>
    </recommendedName>
    <alternativeName>
        <fullName>Calcium pump</fullName>
    </alternativeName>
</protein>
<dbReference type="EC" id="7.2.2.10"/>
<dbReference type="EMBL" id="Y13937">
    <property type="protein sequence ID" value="CAA74269.1"/>
    <property type="molecule type" value="Genomic_DNA"/>
</dbReference>
<dbReference type="EMBL" id="AL009126">
    <property type="protein sequence ID" value="CAB13439.1"/>
    <property type="molecule type" value="Genomic_DNA"/>
</dbReference>
<dbReference type="PIR" id="H69877">
    <property type="entry name" value="H69877"/>
</dbReference>
<dbReference type="RefSeq" id="WP_003232087.1">
    <property type="nucleotide sequence ID" value="NZ_OZ025638.1"/>
</dbReference>
<dbReference type="SMR" id="O34431"/>
<dbReference type="FunCoup" id="O34431">
    <property type="interactions" value="439"/>
</dbReference>
<dbReference type="IntAct" id="O34431">
    <property type="interactions" value="1"/>
</dbReference>
<dbReference type="STRING" id="224308.BSU15650"/>
<dbReference type="PaxDb" id="224308-BSU15650"/>
<dbReference type="EnsemblBacteria" id="CAB13439">
    <property type="protein sequence ID" value="CAB13439"/>
    <property type="gene ID" value="BSU_15650"/>
</dbReference>
<dbReference type="GeneID" id="936954"/>
<dbReference type="KEGG" id="bsu:BSU15650"/>
<dbReference type="PATRIC" id="fig|224308.179.peg.1705"/>
<dbReference type="eggNOG" id="COG0474">
    <property type="taxonomic scope" value="Bacteria"/>
</dbReference>
<dbReference type="InParanoid" id="O34431"/>
<dbReference type="OrthoDB" id="9813266at2"/>
<dbReference type="PhylomeDB" id="O34431"/>
<dbReference type="BioCyc" id="BSUB:BSU15650-MONOMER"/>
<dbReference type="Proteomes" id="UP000001570">
    <property type="component" value="Chromosome"/>
</dbReference>
<dbReference type="GO" id="GO:0016020">
    <property type="term" value="C:membrane"/>
    <property type="evidence" value="ECO:0000318"/>
    <property type="project" value="GO_Central"/>
</dbReference>
<dbReference type="GO" id="GO:0005886">
    <property type="term" value="C:plasma membrane"/>
    <property type="evidence" value="ECO:0007669"/>
    <property type="project" value="UniProtKB-SubCell"/>
</dbReference>
<dbReference type="GO" id="GO:0005524">
    <property type="term" value="F:ATP binding"/>
    <property type="evidence" value="ECO:0007669"/>
    <property type="project" value="UniProtKB-KW"/>
</dbReference>
<dbReference type="GO" id="GO:0016887">
    <property type="term" value="F:ATP hydrolysis activity"/>
    <property type="evidence" value="ECO:0007669"/>
    <property type="project" value="InterPro"/>
</dbReference>
<dbReference type="GO" id="GO:0046872">
    <property type="term" value="F:metal ion binding"/>
    <property type="evidence" value="ECO:0007669"/>
    <property type="project" value="UniProtKB-KW"/>
</dbReference>
<dbReference type="GO" id="GO:0005388">
    <property type="term" value="F:P-type calcium transporter activity"/>
    <property type="evidence" value="ECO:0007669"/>
    <property type="project" value="UniProtKB-EC"/>
</dbReference>
<dbReference type="GO" id="GO:0015662">
    <property type="term" value="F:P-type ion transporter activity"/>
    <property type="evidence" value="ECO:0000318"/>
    <property type="project" value="GO_Central"/>
</dbReference>
<dbReference type="GO" id="GO:0034220">
    <property type="term" value="P:monoatomic ion transmembrane transport"/>
    <property type="evidence" value="ECO:0000318"/>
    <property type="project" value="GO_Central"/>
</dbReference>
<dbReference type="CDD" id="cd02089">
    <property type="entry name" value="P-type_ATPase_Ca_prok"/>
    <property type="match status" value="1"/>
</dbReference>
<dbReference type="FunFam" id="2.70.150.10:FF:000016">
    <property type="entry name" value="Calcium-transporting P-type ATPase putative"/>
    <property type="match status" value="1"/>
</dbReference>
<dbReference type="FunFam" id="3.40.50.1000:FF:000028">
    <property type="entry name" value="Calcium-transporting P-type ATPase, putative"/>
    <property type="match status" value="1"/>
</dbReference>
<dbReference type="FunFam" id="1.20.1110.10:FF:000065">
    <property type="entry name" value="Sarcoplasmic/endoplasmic reticulum calcium ATPase 1"/>
    <property type="match status" value="1"/>
</dbReference>
<dbReference type="Gene3D" id="3.40.1110.10">
    <property type="entry name" value="Calcium-transporting ATPase, cytoplasmic domain N"/>
    <property type="match status" value="1"/>
</dbReference>
<dbReference type="Gene3D" id="2.70.150.10">
    <property type="entry name" value="Calcium-transporting ATPase, cytoplasmic transduction domain A"/>
    <property type="match status" value="1"/>
</dbReference>
<dbReference type="Gene3D" id="1.20.1110.10">
    <property type="entry name" value="Calcium-transporting ATPase, transmembrane domain"/>
    <property type="match status" value="1"/>
</dbReference>
<dbReference type="Gene3D" id="3.40.50.1000">
    <property type="entry name" value="HAD superfamily/HAD-like"/>
    <property type="match status" value="1"/>
</dbReference>
<dbReference type="InterPro" id="IPR006068">
    <property type="entry name" value="ATPase_P-typ_cation-transptr_C"/>
</dbReference>
<dbReference type="InterPro" id="IPR004014">
    <property type="entry name" value="ATPase_P-typ_cation-transptr_N"/>
</dbReference>
<dbReference type="InterPro" id="IPR023299">
    <property type="entry name" value="ATPase_P-typ_cyto_dom_N"/>
</dbReference>
<dbReference type="InterPro" id="IPR018303">
    <property type="entry name" value="ATPase_P-typ_P_site"/>
</dbReference>
<dbReference type="InterPro" id="IPR023298">
    <property type="entry name" value="ATPase_P-typ_TM_dom_sf"/>
</dbReference>
<dbReference type="InterPro" id="IPR008250">
    <property type="entry name" value="ATPase_P-typ_transduc_dom_A_sf"/>
</dbReference>
<dbReference type="InterPro" id="IPR050510">
    <property type="entry name" value="Cation_transp_ATPase_P-type"/>
</dbReference>
<dbReference type="InterPro" id="IPR036412">
    <property type="entry name" value="HAD-like_sf"/>
</dbReference>
<dbReference type="InterPro" id="IPR023214">
    <property type="entry name" value="HAD_sf"/>
</dbReference>
<dbReference type="InterPro" id="IPR005782">
    <property type="entry name" value="P-type_ATPase_IIA"/>
</dbReference>
<dbReference type="InterPro" id="IPR001757">
    <property type="entry name" value="P_typ_ATPase"/>
</dbReference>
<dbReference type="InterPro" id="IPR044492">
    <property type="entry name" value="P_typ_ATPase_HD_dom"/>
</dbReference>
<dbReference type="NCBIfam" id="TIGR01116">
    <property type="entry name" value="ATPase-IIA1_Ca"/>
    <property type="match status" value="1"/>
</dbReference>
<dbReference type="NCBIfam" id="TIGR01494">
    <property type="entry name" value="ATPase_P-type"/>
    <property type="match status" value="3"/>
</dbReference>
<dbReference type="PANTHER" id="PTHR43294:SF21">
    <property type="entry name" value="CATION TRANSPORTING ATPASE"/>
    <property type="match status" value="1"/>
</dbReference>
<dbReference type="PANTHER" id="PTHR43294">
    <property type="entry name" value="SODIUM/POTASSIUM-TRANSPORTING ATPASE SUBUNIT ALPHA"/>
    <property type="match status" value="1"/>
</dbReference>
<dbReference type="Pfam" id="PF13246">
    <property type="entry name" value="Cation_ATPase"/>
    <property type="match status" value="1"/>
</dbReference>
<dbReference type="Pfam" id="PF00689">
    <property type="entry name" value="Cation_ATPase_C"/>
    <property type="match status" value="1"/>
</dbReference>
<dbReference type="Pfam" id="PF00690">
    <property type="entry name" value="Cation_ATPase_N"/>
    <property type="match status" value="1"/>
</dbReference>
<dbReference type="Pfam" id="PF00122">
    <property type="entry name" value="E1-E2_ATPase"/>
    <property type="match status" value="1"/>
</dbReference>
<dbReference type="PRINTS" id="PR00119">
    <property type="entry name" value="CATATPASE"/>
</dbReference>
<dbReference type="PRINTS" id="PR00120">
    <property type="entry name" value="HATPASE"/>
</dbReference>
<dbReference type="SFLD" id="SFLDG00002">
    <property type="entry name" value="C1.7:_P-type_atpase_like"/>
    <property type="match status" value="1"/>
</dbReference>
<dbReference type="SFLD" id="SFLDF00027">
    <property type="entry name" value="p-type_atpase"/>
    <property type="match status" value="1"/>
</dbReference>
<dbReference type="SMART" id="SM00831">
    <property type="entry name" value="Cation_ATPase_N"/>
    <property type="match status" value="1"/>
</dbReference>
<dbReference type="SUPFAM" id="SSF81653">
    <property type="entry name" value="Calcium ATPase, transduction domain A"/>
    <property type="match status" value="1"/>
</dbReference>
<dbReference type="SUPFAM" id="SSF81665">
    <property type="entry name" value="Calcium ATPase, transmembrane domain M"/>
    <property type="match status" value="1"/>
</dbReference>
<dbReference type="SUPFAM" id="SSF56784">
    <property type="entry name" value="HAD-like"/>
    <property type="match status" value="1"/>
</dbReference>
<dbReference type="SUPFAM" id="SSF81660">
    <property type="entry name" value="Metal cation-transporting ATPase, ATP-binding domain N"/>
    <property type="match status" value="1"/>
</dbReference>
<dbReference type="PROSITE" id="PS00154">
    <property type="entry name" value="ATPASE_E1_E2"/>
    <property type="match status" value="1"/>
</dbReference>
<reference key="1">
    <citation type="journal article" date="1998" name="Microbiology">
        <title>A 28 kbp segment from the spoVM region of the Bacillus subtilis 168 genome.</title>
        <authorList>
            <person name="Foulger D."/>
            <person name="Errington J."/>
        </authorList>
    </citation>
    <scope>NUCLEOTIDE SEQUENCE [GENOMIC DNA]</scope>
    <source>
        <strain>168</strain>
    </source>
</reference>
<reference key="2">
    <citation type="journal article" date="1997" name="Nature">
        <title>The complete genome sequence of the Gram-positive bacterium Bacillus subtilis.</title>
        <authorList>
            <person name="Kunst F."/>
            <person name="Ogasawara N."/>
            <person name="Moszer I."/>
            <person name="Albertini A.M."/>
            <person name="Alloni G."/>
            <person name="Azevedo V."/>
            <person name="Bertero M.G."/>
            <person name="Bessieres P."/>
            <person name="Bolotin A."/>
            <person name="Borchert S."/>
            <person name="Borriss R."/>
            <person name="Boursier L."/>
            <person name="Brans A."/>
            <person name="Braun M."/>
            <person name="Brignell S.C."/>
            <person name="Bron S."/>
            <person name="Brouillet S."/>
            <person name="Bruschi C.V."/>
            <person name="Caldwell B."/>
            <person name="Capuano V."/>
            <person name="Carter N.M."/>
            <person name="Choi S.-K."/>
            <person name="Codani J.-J."/>
            <person name="Connerton I.F."/>
            <person name="Cummings N.J."/>
            <person name="Daniel R.A."/>
            <person name="Denizot F."/>
            <person name="Devine K.M."/>
            <person name="Duesterhoeft A."/>
            <person name="Ehrlich S.D."/>
            <person name="Emmerson P.T."/>
            <person name="Entian K.-D."/>
            <person name="Errington J."/>
            <person name="Fabret C."/>
            <person name="Ferrari E."/>
            <person name="Foulger D."/>
            <person name="Fritz C."/>
            <person name="Fujita M."/>
            <person name="Fujita Y."/>
            <person name="Fuma S."/>
            <person name="Galizzi A."/>
            <person name="Galleron N."/>
            <person name="Ghim S.-Y."/>
            <person name="Glaser P."/>
            <person name="Goffeau A."/>
            <person name="Golightly E.J."/>
            <person name="Grandi G."/>
            <person name="Guiseppi G."/>
            <person name="Guy B.J."/>
            <person name="Haga K."/>
            <person name="Haiech J."/>
            <person name="Harwood C.R."/>
            <person name="Henaut A."/>
            <person name="Hilbert H."/>
            <person name="Holsappel S."/>
            <person name="Hosono S."/>
            <person name="Hullo M.-F."/>
            <person name="Itaya M."/>
            <person name="Jones L.-M."/>
            <person name="Joris B."/>
            <person name="Karamata D."/>
            <person name="Kasahara Y."/>
            <person name="Klaerr-Blanchard M."/>
            <person name="Klein C."/>
            <person name="Kobayashi Y."/>
            <person name="Koetter P."/>
            <person name="Koningstein G."/>
            <person name="Krogh S."/>
            <person name="Kumano M."/>
            <person name="Kurita K."/>
            <person name="Lapidus A."/>
            <person name="Lardinois S."/>
            <person name="Lauber J."/>
            <person name="Lazarevic V."/>
            <person name="Lee S.-M."/>
            <person name="Levine A."/>
            <person name="Liu H."/>
            <person name="Masuda S."/>
            <person name="Mauel C."/>
            <person name="Medigue C."/>
            <person name="Medina N."/>
            <person name="Mellado R.P."/>
            <person name="Mizuno M."/>
            <person name="Moestl D."/>
            <person name="Nakai S."/>
            <person name="Noback M."/>
            <person name="Noone D."/>
            <person name="O'Reilly M."/>
            <person name="Ogawa K."/>
            <person name="Ogiwara A."/>
            <person name="Oudega B."/>
            <person name="Park S.-H."/>
            <person name="Parro V."/>
            <person name="Pohl T.M."/>
            <person name="Portetelle D."/>
            <person name="Porwollik S."/>
            <person name="Prescott A.M."/>
            <person name="Presecan E."/>
            <person name="Pujic P."/>
            <person name="Purnelle B."/>
            <person name="Rapoport G."/>
            <person name="Rey M."/>
            <person name="Reynolds S."/>
            <person name="Rieger M."/>
            <person name="Rivolta C."/>
            <person name="Rocha E."/>
            <person name="Roche B."/>
            <person name="Rose M."/>
            <person name="Sadaie Y."/>
            <person name="Sato T."/>
            <person name="Scanlan E."/>
            <person name="Schleich S."/>
            <person name="Schroeter R."/>
            <person name="Scoffone F."/>
            <person name="Sekiguchi J."/>
            <person name="Sekowska A."/>
            <person name="Seror S.J."/>
            <person name="Serror P."/>
            <person name="Shin B.-S."/>
            <person name="Soldo B."/>
            <person name="Sorokin A."/>
            <person name="Tacconi E."/>
            <person name="Takagi T."/>
            <person name="Takahashi H."/>
            <person name="Takemaru K."/>
            <person name="Takeuchi M."/>
            <person name="Tamakoshi A."/>
            <person name="Tanaka T."/>
            <person name="Terpstra P."/>
            <person name="Tognoni A."/>
            <person name="Tosato V."/>
            <person name="Uchiyama S."/>
            <person name="Vandenbol M."/>
            <person name="Vannier F."/>
            <person name="Vassarotti A."/>
            <person name="Viari A."/>
            <person name="Wambutt R."/>
            <person name="Wedler E."/>
            <person name="Wedler H."/>
            <person name="Weitzenegger T."/>
            <person name="Winters P."/>
            <person name="Wipat A."/>
            <person name="Yamamoto H."/>
            <person name="Yamane K."/>
            <person name="Yasumoto K."/>
            <person name="Yata K."/>
            <person name="Yoshida K."/>
            <person name="Yoshikawa H.-F."/>
            <person name="Zumstein E."/>
            <person name="Yoshikawa H."/>
            <person name="Danchin A."/>
        </authorList>
    </citation>
    <scope>NUCLEOTIDE SEQUENCE [LARGE SCALE GENOMIC DNA]</scope>
    <source>
        <strain>168</strain>
    </source>
</reference>
<reference key="3">
    <citation type="journal article" date="2002" name="Cell Calcium">
        <title>Expression of a P-type Ca(2+)-transport ATPase in Bacillus subtilis during sporulation.</title>
        <authorList>
            <person name="Raeymaekers L."/>
            <person name="Wuytack E."/>
            <person name="Willems I."/>
            <person name="Michiels C.W."/>
            <person name="Wuytack F."/>
        </authorList>
    </citation>
    <scope>FUNCTION</scope>
    <scope>CATALYTIC ACTIVITY</scope>
    <scope>SUBCELLULAR LOCATION</scope>
    <scope>DEVELOPMENTAL STAGE</scope>
    <scope>INDUCTION</scope>
    <scope>PHOSPHORYLATION</scope>
    <scope>DISRUPTION PHENOTYPE</scope>
    <source>
        <strain>168 / PS832</strain>
    </source>
</reference>
<accession>O34431</accession>
<accession>Q799L2</accession>
<proteinExistence type="evidence at protein level"/>
<feature type="chain" id="PRO_0000360851" description="Calcium-transporting ATPase">
    <location>
        <begin position="1"/>
        <end position="890"/>
    </location>
</feature>
<feature type="topological domain" description="Cytoplasmic" evidence="1">
    <location>
        <begin position="1"/>
        <end position="47"/>
    </location>
</feature>
<feature type="transmembrane region" description="Helical; Name=1" evidence="1">
    <location>
        <begin position="48"/>
        <end position="68"/>
    </location>
</feature>
<feature type="topological domain" description="Extracellular" evidence="1">
    <location>
        <begin position="69"/>
        <end position="78"/>
    </location>
</feature>
<feature type="transmembrane region" description="Helical; Name=2" evidence="1">
    <location>
        <begin position="79"/>
        <end position="99"/>
    </location>
</feature>
<feature type="topological domain" description="Cytoplasmic" evidence="1">
    <location>
        <begin position="100"/>
        <end position="238"/>
    </location>
</feature>
<feature type="transmembrane region" description="Helical; Name=3" evidence="1">
    <location>
        <begin position="239"/>
        <end position="258"/>
    </location>
</feature>
<feature type="topological domain" description="Extracellular" evidence="1">
    <location>
        <begin position="259"/>
        <end position="270"/>
    </location>
</feature>
<feature type="transmembrane region" description="Helical; Name=4" evidence="1">
    <location>
        <begin position="271"/>
        <end position="288"/>
    </location>
</feature>
<feature type="topological domain" description="Cytoplasmic" evidence="1">
    <location>
        <begin position="289"/>
        <end position="688"/>
    </location>
</feature>
<feature type="transmembrane region" description="Helical; Name=5" evidence="1">
    <location>
        <begin position="689"/>
        <end position="708"/>
    </location>
</feature>
<feature type="topological domain" description="Extracellular" evidence="1">
    <location>
        <begin position="709"/>
        <end position="718"/>
    </location>
</feature>
<feature type="transmembrane region" description="Helical; Name=6" evidence="1">
    <location>
        <begin position="719"/>
        <end position="739"/>
    </location>
</feature>
<feature type="topological domain" description="Cytoplasmic" evidence="1">
    <location>
        <begin position="740"/>
        <end position="759"/>
    </location>
</feature>
<feature type="transmembrane region" description="Helical; Name=7" evidence="1">
    <location>
        <begin position="760"/>
        <end position="782"/>
    </location>
</feature>
<feature type="topological domain" description="Extracellular" evidence="1">
    <location>
        <begin position="783"/>
        <end position="798"/>
    </location>
</feature>
<feature type="transmembrane region" description="Helical; Name=8" evidence="1">
    <location>
        <begin position="799"/>
        <end position="818"/>
    </location>
</feature>
<feature type="topological domain" description="Cytoplasmic" evidence="1">
    <location>
        <begin position="819"/>
        <end position="830"/>
    </location>
</feature>
<feature type="transmembrane region" description="Helical; Name=9" evidence="1">
    <location>
        <begin position="831"/>
        <end position="849"/>
    </location>
</feature>
<feature type="topological domain" description="Extracellular" evidence="1">
    <location>
        <begin position="850"/>
        <end position="864"/>
    </location>
</feature>
<feature type="transmembrane region" description="Helical; Name=10" evidence="1">
    <location>
        <begin position="865"/>
        <end position="885"/>
    </location>
</feature>
<feature type="topological domain" description="Cytoplasmic" evidence="1">
    <location>
        <begin position="886"/>
        <end position="890"/>
    </location>
</feature>
<feature type="active site" description="4-aspartylphosphate intermediate" evidence="5">
    <location>
        <position position="326"/>
    </location>
</feature>
<feature type="binding site" evidence="1">
    <location>
        <position position="279"/>
    </location>
    <ligand>
        <name>Ca(2+)</name>
        <dbReference type="ChEBI" id="CHEBI:29108"/>
        <label>2</label>
    </ligand>
</feature>
<feature type="binding site" evidence="1">
    <location>
        <position position="280"/>
    </location>
    <ligand>
        <name>Ca(2+)</name>
        <dbReference type="ChEBI" id="CHEBI:29108"/>
        <label>2</label>
    </ligand>
</feature>
<feature type="binding site" evidence="1">
    <location>
        <position position="282"/>
    </location>
    <ligand>
        <name>Ca(2+)</name>
        <dbReference type="ChEBI" id="CHEBI:29108"/>
        <label>2</label>
    </ligand>
</feature>
<feature type="binding site" evidence="1">
    <location>
        <position position="284"/>
    </location>
    <ligand>
        <name>Ca(2+)</name>
        <dbReference type="ChEBI" id="CHEBI:29108"/>
        <label>2</label>
    </ligand>
</feature>
<feature type="binding site" evidence="1">
    <location>
        <position position="633"/>
    </location>
    <ligand>
        <name>Mg(2+)</name>
        <dbReference type="ChEBI" id="CHEBI:18420"/>
    </ligand>
</feature>
<feature type="binding site" evidence="1">
    <location>
        <position position="637"/>
    </location>
    <ligand>
        <name>Mg(2+)</name>
        <dbReference type="ChEBI" id="CHEBI:18420"/>
    </ligand>
</feature>
<feature type="binding site" evidence="1">
    <location>
        <position position="699"/>
    </location>
    <ligand>
        <name>Ca(2+)</name>
        <dbReference type="ChEBI" id="CHEBI:29108"/>
        <label>1</label>
    </ligand>
</feature>
<feature type="binding site" evidence="1">
    <location>
        <position position="702"/>
    </location>
    <ligand>
        <name>Ca(2+)</name>
        <dbReference type="ChEBI" id="CHEBI:29108"/>
        <label>1</label>
    </ligand>
</feature>
<feature type="binding site" evidence="1">
    <location>
        <position position="727"/>
    </location>
    <ligand>
        <name>Ca(2+)</name>
        <dbReference type="ChEBI" id="CHEBI:29108"/>
        <label>2</label>
    </ligand>
</feature>
<feature type="binding site" evidence="1">
    <location>
        <position position="730"/>
    </location>
    <ligand>
        <name>Ca(2+)</name>
        <dbReference type="ChEBI" id="CHEBI:29108"/>
        <label>1</label>
    </ligand>
</feature>
<feature type="binding site" evidence="1">
    <location>
        <position position="731"/>
    </location>
    <ligand>
        <name>Ca(2+)</name>
        <dbReference type="ChEBI" id="CHEBI:29108"/>
        <label>1</label>
    </ligand>
</feature>
<feature type="binding site" evidence="1">
    <location>
        <position position="731"/>
    </location>
    <ligand>
        <name>Ca(2+)</name>
        <dbReference type="ChEBI" id="CHEBI:29108"/>
        <label>2</label>
    </ligand>
</feature>